<sequence length="2238" mass="262195">MKKMMRHQVKLGILELREIMREIHNYYYLLLLDSWTKLNSVGSLIHLFFHQERFLKLFDPRIFSILLSRNLQGSPSNRYFTIKGVILFVVGVLIYRINNQNMVERKNLYLTGLFPIPMNSTGPIKDRLEEAIGSSNINRLSVLLLYFPKGKNISERYFLNPKETAGVLTITKKGSVPESNWGSRRWRNFIGVKRGNFSCPIANETVGGIDILFKDKFRKNMEFTFVYYMDDLTHNDPDWEFFYRLSTRKSENRINWNSGPLFKILVKDCISYLMSAFREKRPKGEGPESTIQSNKIRHVFHLFSIKRGTISLQNCTHFYMWQFRRDLFRSWGNNPPESSFLRNVSREISSNAWLGNKGRFFSKGRNVLSNLQYDSTGSSLVNVTDSSQLKGSEDQSIERLASIRNEDSEYHALINKREVQQLEESSMTLESDRLPKSLSGYCSTSQLFKERENPMINFMFPGEMEEFIGNPTRSVRSFCSDRWSELHLWSNPTEKSTLDHKFVKNHLSFVRGAENKEIKNLRRIITYLQKTVSIHSISSDPRWDRVPKHDPDMDSFKKNSLFFLFHRFHERNRGAYPLRHDFESEERLQEMTELFTLLISEPDLVYHKGFSFYIYIDSYGLDKKNLLNEVLNARAESKNKSLWVLSPILFRYEEIEYFFKRIRQKRVWWISCGNGLVDLKQNDDGYIRNLFNILFLMNKSDRNFEHRMQGDRKGTAIFNQRTIMKCMIKQDHTYIYKRSNGTKNFQEHLEHFLSQQKSDFKVQKRYFQVLFDQLRICLTKNLIHWFEVRKKVEKKVEKNVYKLVTFLLSKSLRFFFLPQSLHFFFIKVLRFVTEVILFLSNSFPSLCVSFGNTPIQRSEIYISELKSSNEQLCNKLFESIGFQIVHLKKLNPFLLEEFDTSNFVINVGTRSPFLLNKIPKRIFDSLPTRTNHSKYFDNKDSYFSKIFHDKDNWLNHPKPFHRSSLISSFYKANQLRFRNHLHHFLFYCNKRFPFSVEKARNTNSHFLYGQFLNILLFRKKIFSLCVGQKKHVFWSRATLSPIESQVSNIFIPKDFPQSGDEGYNLDKYFNFLIQPDPVIRRAISSIVETSGTPLTEAQKGDLERTYCKPLSDINLSDSEVNNFHEYPNFNSNMGLVHILFSGKYLSSEKHSLCLKKGAGVHKERMFTTFQRDSSFSILSETWNLFQTYLPSFFTSTGYKYLTSIFSENFSYLLSILSSRVSLFQDILGLSWRILQIRLSKMPLFLRREISSKWLHNLFLSKEMIRRKTQSSLISKHLRSTKFWEFFYSLLFLLLVAGYLVSIHFFFISRAFSELQTEFKSLKSLMTPSSAIELRKLLDKYPRSEPNSFWLKNIFLVVMEQLRDSLEEIKGFVFGLNRIGLTSGVKSIRFKNFKNKDFNIKGIGIIELILRPITRIAFSLNTRHISHTSKEIYSLIIKRKNVNGVWIDDKIESWVANSDSIHEEERKLLVQLSALTTEKRILLSLTHSDHFSKNDSGYQMIEQPGAIYLRYLVDIHQKHLMNYEFNTSCLAERRIFLAHSQTITYSQTSYGTNSFHFPSHGKPFSLRLALSPSRGILVIGSIGTGRSYLVKYLATNSYVPFITVFPNKFLDKNPQFIDDIDIDNSNNIDASDDIDMDNSDNIDDDIDRDLATELELLTWMNALTMDREMKAEIARLFITLQFELARAMSPCIIWIPNIHDLDVNESNYLSLGLLVNHLSRDCERCSPINILVIASTHIPQKVDPALIAPKKLNTCIKLRRLLIPQQRKYFFTLSYTRGFHLENKMFHTNGFGSITMGPNARDIVALTNEVLSISITQKKSIIDTNTIRSALHRQTWDLQSQVRLVQDHGILFYQIGRAVAQNVLLSNLSNCPIDPISIYLKKKSCNEGDSYLYKWYFELGTSMKKLTILLYLLSCTAGSVAQDLWSLPGPDEKNGITSYGLVENDSDLVHGLLEVEGALVGSSRTEKNCSKFENDRVTLLLRPEPRNPLERRQNGSCSILDQRFLSEKDESEFEEGALAPQQIEEDLFNHIVWAPTIWRPWGFLCIERPNELGFSYWSRSFRGKRILYDEEDELEENDSEFLQSGTMQYKTRDRSSKEKGLFRISQFIWDPADPLFFLFKDRPPGSVFSRLELFADEEMSKGLLTSQTSQIEHLFRYKYPRWFINKTQEKHFEFLIHRQRCLRTNSSLSNRSFRSNTLSESYQYLSNLFLSNGTLLDQMTKTLLRKRWLFPDEMKIGFM</sequence>
<geneLocation type="plastid"/>
<protein>
    <recommendedName>
        <fullName evidence="1">Protein Ycf2</fullName>
    </recommendedName>
</protein>
<organism>
    <name type="scientific">Cuscuta exaltata</name>
    <name type="common">Tall dodder</name>
    <dbReference type="NCBI Taxonomy" id="476139"/>
    <lineage>
        <taxon>Eukaryota</taxon>
        <taxon>Viridiplantae</taxon>
        <taxon>Streptophyta</taxon>
        <taxon>Embryophyta</taxon>
        <taxon>Tracheophyta</taxon>
        <taxon>Spermatophyta</taxon>
        <taxon>Magnoliopsida</taxon>
        <taxon>eudicotyledons</taxon>
        <taxon>Gunneridae</taxon>
        <taxon>Pentapetalae</taxon>
        <taxon>asterids</taxon>
        <taxon>lamiids</taxon>
        <taxon>Solanales</taxon>
        <taxon>Convolvulaceae</taxon>
        <taxon>Cuscuteae</taxon>
        <taxon>Cuscuta</taxon>
        <taxon>Cuscuta subgen. Monogynella</taxon>
    </lineage>
</organism>
<gene>
    <name evidence="1" type="primary">ycf2</name>
</gene>
<keyword id="KW-0067">ATP-binding</keyword>
<keyword id="KW-0547">Nucleotide-binding</keyword>
<keyword id="KW-0934">Plastid</keyword>
<feature type="chain" id="PRO_0000343767" description="Protein Ycf2">
    <location>
        <begin position="1"/>
        <end position="2238"/>
    </location>
</feature>
<feature type="binding site" evidence="1">
    <location>
        <begin position="1579"/>
        <end position="1586"/>
    </location>
    <ligand>
        <name>ATP</name>
        <dbReference type="ChEBI" id="CHEBI:30616"/>
    </ligand>
</feature>
<name>YCF2_CUSEX</name>
<proteinExistence type="inferred from homology"/>
<reference key="1">
    <citation type="journal article" date="2007" name="BMC Plant Biol.">
        <title>Complete plastid genome sequences suggest strong selection for retention of photosynthetic genes in the parasitic plant genus Cuscuta.</title>
        <authorList>
            <person name="McNeal J.R."/>
            <person name="Kuehl J.V."/>
            <person name="Boore J.L."/>
            <person name="dePamphilis C.W."/>
        </authorList>
    </citation>
    <scope>NUCLEOTIDE SEQUENCE [LARGE SCALE GENOMIC DNA]</scope>
</reference>
<dbReference type="EMBL" id="EU189132">
    <property type="protein sequence ID" value="ABW83734.1"/>
    <property type="molecule type" value="Genomic_DNA"/>
</dbReference>
<dbReference type="RefSeq" id="YP_001542570.1">
    <property type="nucleotide sequence ID" value="NC_009963.1"/>
</dbReference>
<dbReference type="GeneID" id="5729597"/>
<dbReference type="GO" id="GO:0009536">
    <property type="term" value="C:plastid"/>
    <property type="evidence" value="ECO:0007669"/>
    <property type="project" value="UniProtKB-SubCell"/>
</dbReference>
<dbReference type="GO" id="GO:0005524">
    <property type="term" value="F:ATP binding"/>
    <property type="evidence" value="ECO:0007669"/>
    <property type="project" value="UniProtKB-KW"/>
</dbReference>
<dbReference type="GO" id="GO:0016887">
    <property type="term" value="F:ATP hydrolysis activity"/>
    <property type="evidence" value="ECO:0007669"/>
    <property type="project" value="InterPro"/>
</dbReference>
<dbReference type="CDD" id="cd19505">
    <property type="entry name" value="RecA-like_Ycf2"/>
    <property type="match status" value="1"/>
</dbReference>
<dbReference type="Gene3D" id="3.40.50.300">
    <property type="entry name" value="P-loop containing nucleotide triphosphate hydrolases"/>
    <property type="match status" value="1"/>
</dbReference>
<dbReference type="HAMAP" id="MF_01330">
    <property type="entry name" value="Ycf2"/>
    <property type="match status" value="1"/>
</dbReference>
<dbReference type="InterPro" id="IPR003593">
    <property type="entry name" value="AAA+_ATPase"/>
</dbReference>
<dbReference type="InterPro" id="IPR003959">
    <property type="entry name" value="ATPase_AAA_core"/>
</dbReference>
<dbReference type="InterPro" id="IPR027417">
    <property type="entry name" value="P-loop_NTPase"/>
</dbReference>
<dbReference type="InterPro" id="IPR008543">
    <property type="entry name" value="Uncharacterised_Ycf2"/>
</dbReference>
<dbReference type="InterPro" id="IPR056777">
    <property type="entry name" value="Ycf2_N"/>
</dbReference>
<dbReference type="PANTHER" id="PTHR33078:SF89">
    <property type="entry name" value="PROTEIN YCF2"/>
    <property type="match status" value="1"/>
</dbReference>
<dbReference type="PANTHER" id="PTHR33078">
    <property type="entry name" value="PROTEIN YCF2-RELATED"/>
    <property type="match status" value="1"/>
</dbReference>
<dbReference type="Pfam" id="PF00004">
    <property type="entry name" value="AAA"/>
    <property type="match status" value="1"/>
</dbReference>
<dbReference type="Pfam" id="PF05695">
    <property type="entry name" value="Ycf2"/>
    <property type="match status" value="3"/>
</dbReference>
<dbReference type="SMART" id="SM00382">
    <property type="entry name" value="AAA"/>
    <property type="match status" value="1"/>
</dbReference>
<dbReference type="SUPFAM" id="SSF52540">
    <property type="entry name" value="P-loop containing nucleoside triphosphate hydrolases"/>
    <property type="match status" value="1"/>
</dbReference>
<comment type="function">
    <text evidence="1">Probable ATPase of unknown function. Its presence in a non-photosynthetic plant (Epifagus virginiana) and experiments in tobacco indicate that it has an essential function which is probably not related to photosynthesis.</text>
</comment>
<comment type="subcellular location">
    <subcellularLocation>
        <location>Plastid</location>
    </subcellularLocation>
</comment>
<comment type="similarity">
    <text evidence="1">Belongs to the Ycf2 family.</text>
</comment>
<comment type="caution">
    <text evidence="2">Young tissue from this organism is photosynthetic and contains some thylakoids, although the photosynthetic activity does not exceed the light compensation point.</text>
</comment>
<evidence type="ECO:0000255" key="1">
    <source>
        <dbReference type="HAMAP-Rule" id="MF_01330"/>
    </source>
</evidence>
<evidence type="ECO:0000305" key="2"/>
<accession>A8W3G3</accession>